<gene>
    <name evidence="2" type="primary">petD</name>
    <name type="ORF">PA099</name>
</gene>
<name>PETD_ORYSA</name>
<dbReference type="EMBL" id="AY522331">
    <property type="protein sequence ID" value="AAS46203.1"/>
    <property type="status" value="ALT_INIT"/>
    <property type="molecule type" value="Genomic_DNA"/>
</dbReference>
<dbReference type="SMR" id="P0C317"/>
<dbReference type="GO" id="GO:0009535">
    <property type="term" value="C:chloroplast thylakoid membrane"/>
    <property type="evidence" value="ECO:0007669"/>
    <property type="project" value="UniProtKB-SubCell"/>
</dbReference>
<dbReference type="GO" id="GO:0009536">
    <property type="term" value="C:plastid"/>
    <property type="evidence" value="ECO:0000305"/>
    <property type="project" value="Gramene"/>
</dbReference>
<dbReference type="GO" id="GO:0045158">
    <property type="term" value="F:electron transporter, transferring electrons within cytochrome b6/f complex of photosystem II activity"/>
    <property type="evidence" value="ECO:0007669"/>
    <property type="project" value="UniProtKB-UniRule"/>
</dbReference>
<dbReference type="GO" id="GO:0045156">
    <property type="term" value="F:electron transporter, transferring electrons within the cyclic electron transport pathway of photosynthesis activity"/>
    <property type="evidence" value="ECO:0007669"/>
    <property type="project" value="InterPro"/>
</dbReference>
<dbReference type="GO" id="GO:0016491">
    <property type="term" value="F:oxidoreductase activity"/>
    <property type="evidence" value="ECO:0007669"/>
    <property type="project" value="InterPro"/>
</dbReference>
<dbReference type="GO" id="GO:0009767">
    <property type="term" value="P:photosynthetic electron transport chain"/>
    <property type="evidence" value="ECO:0007669"/>
    <property type="project" value="InterPro"/>
</dbReference>
<dbReference type="CDD" id="cd00290">
    <property type="entry name" value="cytochrome_b_C"/>
    <property type="match status" value="1"/>
</dbReference>
<dbReference type="FunFam" id="1.10.287.980:FF:000001">
    <property type="entry name" value="Cytochrome b6-f complex subunit 4"/>
    <property type="match status" value="1"/>
</dbReference>
<dbReference type="FunFam" id="1.20.5.510:FF:000002">
    <property type="entry name" value="Cytochrome b6-f complex subunit 4"/>
    <property type="match status" value="1"/>
</dbReference>
<dbReference type="Gene3D" id="1.10.287.980">
    <property type="entry name" value="plastocyanin oxidoreductase"/>
    <property type="match status" value="1"/>
</dbReference>
<dbReference type="Gene3D" id="1.20.5.510">
    <property type="entry name" value="Single helix bin"/>
    <property type="match status" value="1"/>
</dbReference>
<dbReference type="HAMAP" id="MF_01344">
    <property type="entry name" value="Cytb6_f_subIV"/>
    <property type="match status" value="1"/>
</dbReference>
<dbReference type="InterPro" id="IPR005798">
    <property type="entry name" value="Cyt_b/b6_C"/>
</dbReference>
<dbReference type="InterPro" id="IPR036150">
    <property type="entry name" value="Cyt_b/b6_C_sf"/>
</dbReference>
<dbReference type="InterPro" id="IPR005870">
    <property type="entry name" value="Cyt_b6/f_cplx_suIV"/>
</dbReference>
<dbReference type="InterPro" id="IPR048260">
    <property type="entry name" value="Cytochrome_b_C_euk/bac"/>
</dbReference>
<dbReference type="NCBIfam" id="TIGR01156">
    <property type="entry name" value="cytb6_f_IV"/>
    <property type="match status" value="1"/>
</dbReference>
<dbReference type="PANTHER" id="PTHR19271">
    <property type="entry name" value="CYTOCHROME B"/>
    <property type="match status" value="1"/>
</dbReference>
<dbReference type="PANTHER" id="PTHR19271:SF40">
    <property type="entry name" value="CYTOCHROME B"/>
    <property type="match status" value="1"/>
</dbReference>
<dbReference type="Pfam" id="PF00032">
    <property type="entry name" value="Cytochrom_B_C"/>
    <property type="match status" value="1"/>
</dbReference>
<dbReference type="PIRSF" id="PIRSF000033">
    <property type="entry name" value="B6f_17K"/>
    <property type="match status" value="1"/>
</dbReference>
<dbReference type="SUPFAM" id="SSF81648">
    <property type="entry name" value="a domain/subunit of cytochrome bc1 complex (Ubiquinol-cytochrome c reductase)"/>
    <property type="match status" value="1"/>
</dbReference>
<dbReference type="PROSITE" id="PS51003">
    <property type="entry name" value="CYTB_CTER"/>
    <property type="match status" value="1"/>
</dbReference>
<sequence>MGVTKKPDLNDPVLRAKLAKGMGHNYYGEPAWPNDLLYIFPVVILGTIACNVGLAVLEPSMIGEPADPFATPLEILPEWYFFPVFQILRTVPNKLLGVLLMVSVPTGLLTVPFLENVNKFQNPFRRPVATTVFLIGTAVALWLGIGATLPIEKSLTLGLF</sequence>
<proteinExistence type="inferred from homology"/>
<evidence type="ECO:0000250" key="1"/>
<evidence type="ECO:0000255" key="2">
    <source>
        <dbReference type="HAMAP-Rule" id="MF_01344"/>
    </source>
</evidence>
<evidence type="ECO:0000305" key="3"/>
<accession>P0C317</accession>
<accession>P12118</accession>
<accession>Q6QXZ1</accession>
<accession>Q6QY55</accession>
<geneLocation type="chloroplast"/>
<comment type="function">
    <text evidence="2">Component of the cytochrome b6-f complex, which mediates electron transfer between photosystem II (PSII) and photosystem I (PSI), cyclic electron flow around PSI, and state transitions.</text>
</comment>
<comment type="subunit">
    <text evidence="1">The 4 large subunits of the cytochrome b6-f complex are cytochrome b6, subunit IV (17 kDa polypeptide, petD), cytochrome f and the Rieske protein, while the 4 small subunits are petG, petL, petM and petN. The complex functions as a dimer (By similarity).</text>
</comment>
<comment type="subcellular location">
    <subcellularLocation>
        <location evidence="2">Plastid</location>
        <location evidence="2">Chloroplast thylakoid membrane</location>
        <topology evidence="2">Multi-pass membrane protein</topology>
    </subcellularLocation>
</comment>
<comment type="miscellaneous">
    <text>A longer mRNA that is not produced by splicing has been shown to be transcribed in barley and maize; it can also be predicted for rice. It is not known if this mRNA is translated.</text>
</comment>
<comment type="similarity">
    <text evidence="2">Belongs to the cytochrome b family. PetD subfamily.</text>
</comment>
<comment type="sequence caution" evidence="3">
    <conflict type="erroneous initiation">
        <sequence resource="EMBL-CDS" id="AAS46203"/>
    </conflict>
</comment>
<protein>
    <recommendedName>
        <fullName evidence="2">Cytochrome b6-f complex subunit 4</fullName>
    </recommendedName>
    <alternativeName>
        <fullName evidence="2">17 kDa polypeptide</fullName>
    </alternativeName>
</protein>
<reference key="1">
    <citation type="journal article" date="2004" name="Plant Physiol.">
        <title>A comparison of rice chloroplast genomes.</title>
        <authorList>
            <person name="Tang J."/>
            <person name="Xia H."/>
            <person name="Cao M."/>
            <person name="Zhang X."/>
            <person name="Zeng W."/>
            <person name="Hu S."/>
            <person name="Tong W."/>
            <person name="Wang J."/>
            <person name="Wang J."/>
            <person name="Yu J."/>
            <person name="Yang H."/>
            <person name="Zhu L."/>
        </authorList>
    </citation>
    <scope>NUCLEOTIDE SEQUENCE [LARGE SCALE GENOMIC DNA]</scope>
    <source>
        <strain>cv. PA64s</strain>
    </source>
</reference>
<keyword id="KW-0150">Chloroplast</keyword>
<keyword id="KW-0249">Electron transport</keyword>
<keyword id="KW-0472">Membrane</keyword>
<keyword id="KW-0602">Photosynthesis</keyword>
<keyword id="KW-0934">Plastid</keyword>
<keyword id="KW-0793">Thylakoid</keyword>
<keyword id="KW-0812">Transmembrane</keyword>
<keyword id="KW-1133">Transmembrane helix</keyword>
<keyword id="KW-0813">Transport</keyword>
<organism>
    <name type="scientific">Oryza sativa</name>
    <name type="common">Rice</name>
    <dbReference type="NCBI Taxonomy" id="4530"/>
    <lineage>
        <taxon>Eukaryota</taxon>
        <taxon>Viridiplantae</taxon>
        <taxon>Streptophyta</taxon>
        <taxon>Embryophyta</taxon>
        <taxon>Tracheophyta</taxon>
        <taxon>Spermatophyta</taxon>
        <taxon>Magnoliopsida</taxon>
        <taxon>Liliopsida</taxon>
        <taxon>Poales</taxon>
        <taxon>Poaceae</taxon>
        <taxon>BOP clade</taxon>
        <taxon>Oryzoideae</taxon>
        <taxon>Oryzeae</taxon>
        <taxon>Oryzinae</taxon>
        <taxon>Oryza</taxon>
    </lineage>
</organism>
<feature type="chain" id="PRO_0000061877" description="Cytochrome b6-f complex subunit 4">
    <location>
        <begin position="1"/>
        <end position="160"/>
    </location>
</feature>
<feature type="transmembrane region" description="Helical" evidence="2">
    <location>
        <begin position="36"/>
        <end position="56"/>
    </location>
</feature>
<feature type="transmembrane region" description="Helical" evidence="2">
    <location>
        <begin position="95"/>
        <end position="115"/>
    </location>
</feature>
<feature type="transmembrane region" description="Helical" evidence="2">
    <location>
        <begin position="131"/>
        <end position="151"/>
    </location>
</feature>